<protein>
    <recommendedName>
        <fullName evidence="1">Nucleotide-binding protein CJE0423</fullName>
    </recommendedName>
</protein>
<gene>
    <name type="ordered locus">CJE0423</name>
</gene>
<keyword id="KW-0547">Nucleotide-binding</keyword>
<feature type="chain" id="PRO_1000147290" description="Nucleotide-binding protein CJE0423">
    <location>
        <begin position="1"/>
        <end position="163"/>
    </location>
</feature>
<sequence length="163" mass="18307">MASEHSFDISAALDKQELKNAFEQAKKELDSRYDLKGIKCEIDLSEKESIFKLSSSSEGKLDVLKDIVISKLIKRGINPNAIKELSRESGAMFRLNLKANDAIDSENAKKINKAIKDSKLKVNSSIRGEEIRVVAKQIDDLQAVMKLVKELDLELNISFKNLK</sequence>
<accession>Q5HW93</accession>
<comment type="function">
    <text evidence="1">Nucleotide-binding protein.</text>
</comment>
<comment type="similarity">
    <text evidence="1">Belongs to the YajQ family.</text>
</comment>
<dbReference type="EMBL" id="CP000025">
    <property type="protein sequence ID" value="AAW35012.1"/>
    <property type="molecule type" value="Genomic_DNA"/>
</dbReference>
<dbReference type="RefSeq" id="WP_002854188.1">
    <property type="nucleotide sequence ID" value="NC_003912.7"/>
</dbReference>
<dbReference type="SMR" id="Q5HW93"/>
<dbReference type="KEGG" id="cjr:CJE0423"/>
<dbReference type="HOGENOM" id="CLU_099839_1_0_7"/>
<dbReference type="GO" id="GO:0005829">
    <property type="term" value="C:cytosol"/>
    <property type="evidence" value="ECO:0007669"/>
    <property type="project" value="TreeGrafter"/>
</dbReference>
<dbReference type="GO" id="GO:0000166">
    <property type="term" value="F:nucleotide binding"/>
    <property type="evidence" value="ECO:0007669"/>
    <property type="project" value="TreeGrafter"/>
</dbReference>
<dbReference type="CDD" id="cd11740">
    <property type="entry name" value="YajQ_like"/>
    <property type="match status" value="1"/>
</dbReference>
<dbReference type="Gene3D" id="3.30.70.860">
    <property type="match status" value="1"/>
</dbReference>
<dbReference type="Gene3D" id="3.30.70.990">
    <property type="entry name" value="YajQ-like, domain 2"/>
    <property type="match status" value="1"/>
</dbReference>
<dbReference type="HAMAP" id="MF_00632">
    <property type="entry name" value="YajQ"/>
    <property type="match status" value="1"/>
</dbReference>
<dbReference type="InterPro" id="IPR007551">
    <property type="entry name" value="DUF520"/>
</dbReference>
<dbReference type="InterPro" id="IPR035571">
    <property type="entry name" value="UPF0234-like_C"/>
</dbReference>
<dbReference type="InterPro" id="IPR035570">
    <property type="entry name" value="UPF0234_N"/>
</dbReference>
<dbReference type="InterPro" id="IPR036183">
    <property type="entry name" value="YajQ-like_sf"/>
</dbReference>
<dbReference type="NCBIfam" id="NF003819">
    <property type="entry name" value="PRK05412.1"/>
    <property type="match status" value="1"/>
</dbReference>
<dbReference type="PANTHER" id="PTHR30476">
    <property type="entry name" value="UPF0234 PROTEIN YAJQ"/>
    <property type="match status" value="1"/>
</dbReference>
<dbReference type="PANTHER" id="PTHR30476:SF0">
    <property type="entry name" value="UPF0234 PROTEIN YAJQ"/>
    <property type="match status" value="1"/>
</dbReference>
<dbReference type="Pfam" id="PF04461">
    <property type="entry name" value="DUF520"/>
    <property type="match status" value="1"/>
</dbReference>
<dbReference type="SUPFAM" id="SSF89963">
    <property type="entry name" value="YajQ-like"/>
    <property type="match status" value="2"/>
</dbReference>
<name>Y423_CAMJR</name>
<evidence type="ECO:0000255" key="1">
    <source>
        <dbReference type="HAMAP-Rule" id="MF_00632"/>
    </source>
</evidence>
<reference key="1">
    <citation type="journal article" date="2005" name="PLoS Biol.">
        <title>Major structural differences and novel potential virulence mechanisms from the genomes of multiple Campylobacter species.</title>
        <authorList>
            <person name="Fouts D.E."/>
            <person name="Mongodin E.F."/>
            <person name="Mandrell R.E."/>
            <person name="Miller W.G."/>
            <person name="Rasko D.A."/>
            <person name="Ravel J."/>
            <person name="Brinkac L.M."/>
            <person name="DeBoy R.T."/>
            <person name="Parker C.T."/>
            <person name="Daugherty S.C."/>
            <person name="Dodson R.J."/>
            <person name="Durkin A.S."/>
            <person name="Madupu R."/>
            <person name="Sullivan S.A."/>
            <person name="Shetty J.U."/>
            <person name="Ayodeji M.A."/>
            <person name="Shvartsbeyn A."/>
            <person name="Schatz M.C."/>
            <person name="Badger J.H."/>
            <person name="Fraser C.M."/>
            <person name="Nelson K.E."/>
        </authorList>
    </citation>
    <scope>NUCLEOTIDE SEQUENCE [LARGE SCALE GENOMIC DNA]</scope>
    <source>
        <strain>RM1221</strain>
    </source>
</reference>
<organism>
    <name type="scientific">Campylobacter jejuni (strain RM1221)</name>
    <dbReference type="NCBI Taxonomy" id="195099"/>
    <lineage>
        <taxon>Bacteria</taxon>
        <taxon>Pseudomonadati</taxon>
        <taxon>Campylobacterota</taxon>
        <taxon>Epsilonproteobacteria</taxon>
        <taxon>Campylobacterales</taxon>
        <taxon>Campylobacteraceae</taxon>
        <taxon>Campylobacter</taxon>
    </lineage>
</organism>
<proteinExistence type="inferred from homology"/>